<organism>
    <name type="scientific">Methanospirillum hungatei JF-1 (strain ATCC 27890 / DSM 864 / NBRC 100397 / JF-1)</name>
    <dbReference type="NCBI Taxonomy" id="323259"/>
    <lineage>
        <taxon>Archaea</taxon>
        <taxon>Methanobacteriati</taxon>
        <taxon>Methanobacteriota</taxon>
        <taxon>Stenosarchaea group</taxon>
        <taxon>Methanomicrobia</taxon>
        <taxon>Methanomicrobiales</taxon>
        <taxon>Methanospirillaceae</taxon>
        <taxon>Methanospirillum</taxon>
    </lineage>
</organism>
<protein>
    <recommendedName>
        <fullName evidence="1">CDP-archaeol synthase</fullName>
        <ecNumber evidence="1">2.7.7.67</ecNumber>
    </recommendedName>
    <alternativeName>
        <fullName evidence="1">CDP-2,3-bis-(O-geranylgeranyl)-sn-glycerol synthase</fullName>
    </alternativeName>
</protein>
<keyword id="KW-1003">Cell membrane</keyword>
<keyword id="KW-0444">Lipid biosynthesis</keyword>
<keyword id="KW-0443">Lipid metabolism</keyword>
<keyword id="KW-0460">Magnesium</keyword>
<keyword id="KW-0472">Membrane</keyword>
<keyword id="KW-0594">Phospholipid biosynthesis</keyword>
<keyword id="KW-1208">Phospholipid metabolism</keyword>
<keyword id="KW-1185">Reference proteome</keyword>
<keyword id="KW-0808">Transferase</keyword>
<keyword id="KW-0812">Transmembrane</keyword>
<keyword id="KW-1133">Transmembrane helix</keyword>
<accession>Q2FLB3</accession>
<reference key="1">
    <citation type="journal article" date="2016" name="Stand. Genomic Sci.">
        <title>Complete genome sequence of Methanospirillum hungatei type strain JF1.</title>
        <authorList>
            <person name="Gunsalus R.P."/>
            <person name="Cook L.E."/>
            <person name="Crable B."/>
            <person name="Rohlin L."/>
            <person name="McDonald E."/>
            <person name="Mouttaki H."/>
            <person name="Sieber J.R."/>
            <person name="Poweleit N."/>
            <person name="Zhou H."/>
            <person name="Lapidus A.L."/>
            <person name="Daligault H.E."/>
            <person name="Land M."/>
            <person name="Gilna P."/>
            <person name="Ivanova N."/>
            <person name="Kyrpides N."/>
            <person name="Culley D.E."/>
            <person name="McInerney M.J."/>
        </authorList>
    </citation>
    <scope>NUCLEOTIDE SEQUENCE [LARGE SCALE GENOMIC DNA]</scope>
    <source>
        <strain>ATCC 27890 / DSM 864 / NBRC 100397 / JF-1</strain>
    </source>
</reference>
<proteinExistence type="inferred from homology"/>
<gene>
    <name evidence="1" type="primary">carS</name>
    <name type="ordered locus">Mhun_1107</name>
</gene>
<dbReference type="EC" id="2.7.7.67" evidence="1"/>
<dbReference type="EMBL" id="CP000254">
    <property type="protein sequence ID" value="ABD40856.1"/>
    <property type="status" value="ALT_INIT"/>
    <property type="molecule type" value="Genomic_DNA"/>
</dbReference>
<dbReference type="RefSeq" id="WP_048067819.1">
    <property type="nucleotide sequence ID" value="NC_007796.1"/>
</dbReference>
<dbReference type="SMR" id="Q2FLB3"/>
<dbReference type="FunCoup" id="Q2FLB3">
    <property type="interactions" value="1"/>
</dbReference>
<dbReference type="STRING" id="323259.Mhun_1107"/>
<dbReference type="EnsemblBacteria" id="ABD40856">
    <property type="protein sequence ID" value="ABD40856"/>
    <property type="gene ID" value="Mhun_1107"/>
</dbReference>
<dbReference type="GeneID" id="3922140"/>
<dbReference type="KEGG" id="mhu:Mhun_1107"/>
<dbReference type="eggNOG" id="arCOG04106">
    <property type="taxonomic scope" value="Archaea"/>
</dbReference>
<dbReference type="HOGENOM" id="CLU_105710_0_0_2"/>
<dbReference type="InParanoid" id="Q2FLB3"/>
<dbReference type="UniPathway" id="UPA00940"/>
<dbReference type="Proteomes" id="UP000001941">
    <property type="component" value="Chromosome"/>
</dbReference>
<dbReference type="GO" id="GO:0005886">
    <property type="term" value="C:plasma membrane"/>
    <property type="evidence" value="ECO:0007669"/>
    <property type="project" value="UniProtKB-SubCell"/>
</dbReference>
<dbReference type="GO" id="GO:0043338">
    <property type="term" value="F:CDP-2,3-bis-(O-geranylgeranyl)-sn-glycerol synthase activity"/>
    <property type="evidence" value="ECO:0007669"/>
    <property type="project" value="UniProtKB-EC"/>
</dbReference>
<dbReference type="GO" id="GO:0046474">
    <property type="term" value="P:glycerophospholipid biosynthetic process"/>
    <property type="evidence" value="ECO:0007669"/>
    <property type="project" value="UniProtKB-UniRule"/>
</dbReference>
<dbReference type="HAMAP" id="MF_01117">
    <property type="entry name" value="CDP_archaeol_synth"/>
    <property type="match status" value="1"/>
</dbReference>
<dbReference type="InterPro" id="IPR032690">
    <property type="entry name" value="CarS"/>
</dbReference>
<dbReference type="InterPro" id="IPR002726">
    <property type="entry name" value="CarS_archaea"/>
</dbReference>
<dbReference type="NCBIfam" id="NF003114">
    <property type="entry name" value="PRK04032.1"/>
    <property type="match status" value="1"/>
</dbReference>
<dbReference type="PANTHER" id="PTHR39650">
    <property type="entry name" value="CDP-ARCHAEOL SYNTHASE"/>
    <property type="match status" value="1"/>
</dbReference>
<dbReference type="PANTHER" id="PTHR39650:SF1">
    <property type="entry name" value="CDP-ARCHAEOL SYNTHASE"/>
    <property type="match status" value="1"/>
</dbReference>
<dbReference type="Pfam" id="PF01864">
    <property type="entry name" value="CarS-like"/>
    <property type="match status" value="1"/>
</dbReference>
<sequence length="166" mass="18185">MLPAYLPNNFAALTGGGMPIDMGRNWTDGRRILGDGKTIRGFVGGVTAGILIGAVQMYAEISGLVPWFPPHTLTAVILLAIGSLLGDMVKSFFKRRQGIDRGGEWFLVDQLDFVVGALLLTLLFDPIWMLNTMTIPLLIVILVLTPLLHRTVNIIGYKLGLKKVPW</sequence>
<name>CDPAS_METHJ</name>
<evidence type="ECO:0000255" key="1">
    <source>
        <dbReference type="HAMAP-Rule" id="MF_01117"/>
    </source>
</evidence>
<evidence type="ECO:0000305" key="2"/>
<comment type="function">
    <text evidence="1">Catalyzes the formation of CDP-2,3-bis-(O-geranylgeranyl)-sn-glycerol (CDP-archaeol) from 2,3-bis-(O-geranylgeranyl)-sn-glycerol 1-phosphate (DGGGP) and CTP. This reaction is the third ether-bond-formation step in the biosynthesis of archaeal membrane lipids.</text>
</comment>
<comment type="catalytic activity">
    <reaction evidence="1">
        <text>2,3-bis-O-(geranylgeranyl)-sn-glycerol 1-phosphate + CTP + H(+) = CDP-2,3-bis-O-(geranylgeranyl)-sn-glycerol + diphosphate</text>
        <dbReference type="Rhea" id="RHEA:25690"/>
        <dbReference type="ChEBI" id="CHEBI:15378"/>
        <dbReference type="ChEBI" id="CHEBI:33019"/>
        <dbReference type="ChEBI" id="CHEBI:37563"/>
        <dbReference type="ChEBI" id="CHEBI:58837"/>
        <dbReference type="ChEBI" id="CHEBI:58838"/>
        <dbReference type="EC" id="2.7.7.67"/>
    </reaction>
</comment>
<comment type="cofactor">
    <cofactor evidence="1">
        <name>Mg(2+)</name>
        <dbReference type="ChEBI" id="CHEBI:18420"/>
    </cofactor>
</comment>
<comment type="pathway">
    <text evidence="1">Membrane lipid metabolism; glycerophospholipid metabolism.</text>
</comment>
<comment type="subcellular location">
    <subcellularLocation>
        <location evidence="1">Cell membrane</location>
        <topology evidence="1">Multi-pass membrane protein</topology>
    </subcellularLocation>
</comment>
<comment type="similarity">
    <text evidence="1">Belongs to the CDP-archaeol synthase family.</text>
</comment>
<comment type="sequence caution" evidence="2">
    <conflict type="erroneous initiation">
        <sequence resource="EMBL-CDS" id="ABD40856"/>
    </conflict>
</comment>
<feature type="chain" id="PRO_0000298282" description="CDP-archaeol synthase">
    <location>
        <begin position="1"/>
        <end position="166"/>
    </location>
</feature>
<feature type="transmembrane region" description="Helical" evidence="1">
    <location>
        <begin position="39"/>
        <end position="59"/>
    </location>
</feature>
<feature type="transmembrane region" description="Helical" evidence="1">
    <location>
        <begin position="61"/>
        <end position="81"/>
    </location>
</feature>
<feature type="transmembrane region" description="Helical" evidence="1">
    <location>
        <begin position="104"/>
        <end position="124"/>
    </location>
</feature>
<feature type="transmembrane region" description="Helical" evidence="1">
    <location>
        <begin position="127"/>
        <end position="147"/>
    </location>
</feature>